<proteinExistence type="evidence at protein level"/>
<comment type="function">
    <text evidence="6">Transcription factor maybe involved in reproductive processes. Modulates expression of target genes encoding proteins involved in processes relevant to spermatogenesis.</text>
</comment>
<comment type="subunit">
    <text>Does not interact with itself.</text>
</comment>
<comment type="interaction">
    <interactant intactId="EBI-3923409">
        <id>Q8NHV9</id>
    </interactant>
    <interactant intactId="EBI-2603996">
        <id>Q9BXW4</id>
        <label>MAP1LC3C</label>
    </interactant>
    <organismsDiffer>false</organismsDiffer>
    <experiments>3</experiments>
</comment>
<comment type="subcellular location">
    <subcellularLocation>
        <location evidence="1 3">Nucleus</location>
    </subcellularLocation>
</comment>
<comment type="tissue specificity">
    <text evidence="4 6">Ovary, testis and epididymis. Also detected in the prostate and the mammary gland. Expressed in many tumor cell lines derived from acute lymphocytic leukemia, prostate, endometrial adenocarcinoma, melanoma, bladder carcinoma, colon carcinoma, erythroleukemia and breast carcinoma. Not expressed in placenta. In testis, mainly expressed in germ cells, but also detected in somatic cells such as Sertoli cells, Leydig cells and peritubular cells (PubMed:28171660).</text>
</comment>
<comment type="developmental stage">
    <text evidence="6">Predominantly expressed in late stage germ cells, pachytene spermatocytes and round spermatides.</text>
</comment>
<comment type="induction">
    <text>By androgen.</text>
</comment>
<comment type="domain">
    <text>Mutagenesis of amino acids 147 to 164 and 155 to 164 lead to a major cytoplasmic localization, with only minor localization in the nucleus.</text>
</comment>
<comment type="similarity">
    <text evidence="8">Belongs to the paired-like homeobox family. PEPP subfamily.</text>
</comment>
<comment type="sequence caution" evidence="8">
    <conflict type="erroneous gene model prediction">
        <sequence resource="EMBL-CDS" id="AAC78617"/>
    </conflict>
</comment>
<dbReference type="EMBL" id="AY099086">
    <property type="protein sequence ID" value="AAM22794.1"/>
    <property type="molecule type" value="mRNA"/>
</dbReference>
<dbReference type="EMBL" id="AC005023">
    <property type="protein sequence ID" value="AAC78617.1"/>
    <property type="status" value="ALT_SEQ"/>
    <property type="molecule type" value="Genomic_DNA"/>
</dbReference>
<dbReference type="EMBL" id="BC069324">
    <property type="protein sequence ID" value="AAH69324.1"/>
    <property type="molecule type" value="mRNA"/>
</dbReference>
<dbReference type="EMBL" id="BC069529">
    <property type="protein sequence ID" value="AAH69529.1"/>
    <property type="molecule type" value="mRNA"/>
</dbReference>
<dbReference type="EMBL" id="BC103857">
    <property type="protein sequence ID" value="AAI03858.1"/>
    <property type="molecule type" value="mRNA"/>
</dbReference>
<dbReference type="EMBL" id="BC103858">
    <property type="protein sequence ID" value="AAI03859.1"/>
    <property type="molecule type" value="mRNA"/>
</dbReference>
<dbReference type="CCDS" id="CCDS14593.1"/>
<dbReference type="RefSeq" id="NP_644811.1">
    <property type="nucleotide sequence ID" value="NM_139282.3"/>
</dbReference>
<dbReference type="SMR" id="Q8NHV9"/>
<dbReference type="BioGRID" id="127708">
    <property type="interactions" value="4"/>
</dbReference>
<dbReference type="FunCoup" id="Q8NHV9">
    <property type="interactions" value="31"/>
</dbReference>
<dbReference type="IntAct" id="Q8NHV9">
    <property type="interactions" value="3"/>
</dbReference>
<dbReference type="STRING" id="9606.ENSP00000217999"/>
<dbReference type="GlyGen" id="Q8NHV9">
    <property type="glycosylation" value="1 site"/>
</dbReference>
<dbReference type="BioMuta" id="RHOXF1"/>
<dbReference type="DMDM" id="37537960"/>
<dbReference type="MassIVE" id="Q8NHV9"/>
<dbReference type="PaxDb" id="9606-ENSP00000217999"/>
<dbReference type="PeptideAtlas" id="Q8NHV9"/>
<dbReference type="ProteomicsDB" id="73767"/>
<dbReference type="Antibodypedia" id="29868">
    <property type="antibodies" value="138 antibodies from 25 providers"/>
</dbReference>
<dbReference type="DNASU" id="158800"/>
<dbReference type="Ensembl" id="ENST00000217999.3">
    <property type="protein sequence ID" value="ENSP00000217999.1"/>
    <property type="gene ID" value="ENSG00000101883.6"/>
</dbReference>
<dbReference type="Ensembl" id="ENST00000703667.1">
    <property type="protein sequence ID" value="ENSP00000515423.1"/>
    <property type="gene ID" value="ENSG00000101883.6"/>
</dbReference>
<dbReference type="GeneID" id="158800"/>
<dbReference type="KEGG" id="hsa:158800"/>
<dbReference type="MANE-Select" id="ENST00000217999.3">
    <property type="protein sequence ID" value="ENSP00000217999.1"/>
    <property type="RefSeq nucleotide sequence ID" value="NM_139282.3"/>
    <property type="RefSeq protein sequence ID" value="NP_644811.1"/>
</dbReference>
<dbReference type="UCSC" id="uc004esk.2">
    <property type="organism name" value="human"/>
</dbReference>
<dbReference type="AGR" id="HGNC:29993"/>
<dbReference type="CTD" id="158800"/>
<dbReference type="DisGeNET" id="158800"/>
<dbReference type="GeneCards" id="RHOXF1"/>
<dbReference type="HGNC" id="HGNC:29993">
    <property type="gene designation" value="RHOXF1"/>
</dbReference>
<dbReference type="HPA" id="ENSG00000101883">
    <property type="expression patterns" value="Tissue enhanced (brain, testis)"/>
</dbReference>
<dbReference type="MIM" id="300446">
    <property type="type" value="gene"/>
</dbReference>
<dbReference type="neXtProt" id="NX_Q8NHV9"/>
<dbReference type="OpenTargets" id="ENSG00000101883"/>
<dbReference type="PharmGKB" id="PA162401287"/>
<dbReference type="VEuPathDB" id="HostDB:ENSG00000101883"/>
<dbReference type="eggNOG" id="KOG0490">
    <property type="taxonomic scope" value="Eukaryota"/>
</dbReference>
<dbReference type="GeneTree" id="ENSGT00940000163385"/>
<dbReference type="HOGENOM" id="CLU_118646_0_0_1"/>
<dbReference type="InParanoid" id="Q8NHV9"/>
<dbReference type="OMA" id="DDCVYIV"/>
<dbReference type="OrthoDB" id="9634605at2759"/>
<dbReference type="PAN-GO" id="Q8NHV9">
    <property type="GO annotations" value="4 GO annotations based on evolutionary models"/>
</dbReference>
<dbReference type="PhylomeDB" id="Q8NHV9"/>
<dbReference type="TreeFam" id="TF339348"/>
<dbReference type="PathwayCommons" id="Q8NHV9"/>
<dbReference type="SignaLink" id="Q8NHV9"/>
<dbReference type="SIGNOR" id="Q8NHV9"/>
<dbReference type="BioGRID-ORCS" id="158800">
    <property type="hits" value="14 hits in 796 CRISPR screens"/>
</dbReference>
<dbReference type="GeneWiki" id="RHOXF1"/>
<dbReference type="GenomeRNAi" id="158800"/>
<dbReference type="Pharos" id="Q8NHV9">
    <property type="development level" value="Tbio"/>
</dbReference>
<dbReference type="PRO" id="PR:Q8NHV9"/>
<dbReference type="Proteomes" id="UP000005640">
    <property type="component" value="Chromosome X"/>
</dbReference>
<dbReference type="RNAct" id="Q8NHV9">
    <property type="molecule type" value="protein"/>
</dbReference>
<dbReference type="Bgee" id="ENSG00000101883">
    <property type="expression patterns" value="Expressed in primordial germ cell in gonad and 94 other cell types or tissues"/>
</dbReference>
<dbReference type="GO" id="GO:0000785">
    <property type="term" value="C:chromatin"/>
    <property type="evidence" value="ECO:0000247"/>
    <property type="project" value="NTNU_SB"/>
</dbReference>
<dbReference type="GO" id="GO:0005829">
    <property type="term" value="C:cytosol"/>
    <property type="evidence" value="ECO:0000314"/>
    <property type="project" value="HPA"/>
</dbReference>
<dbReference type="GO" id="GO:0005654">
    <property type="term" value="C:nucleoplasm"/>
    <property type="evidence" value="ECO:0000314"/>
    <property type="project" value="HPA"/>
</dbReference>
<dbReference type="GO" id="GO:0005634">
    <property type="term" value="C:nucleus"/>
    <property type="evidence" value="ECO:0000314"/>
    <property type="project" value="UniProtKB"/>
</dbReference>
<dbReference type="GO" id="GO:0003677">
    <property type="term" value="F:DNA binding"/>
    <property type="evidence" value="ECO:0000303"/>
    <property type="project" value="UniProtKB"/>
</dbReference>
<dbReference type="GO" id="GO:0003700">
    <property type="term" value="F:DNA-binding transcription factor activity"/>
    <property type="evidence" value="ECO:0000303"/>
    <property type="project" value="UniProtKB"/>
</dbReference>
<dbReference type="GO" id="GO:0000981">
    <property type="term" value="F:DNA-binding transcription factor activity, RNA polymerase II-specific"/>
    <property type="evidence" value="ECO:0000247"/>
    <property type="project" value="NTNU_SB"/>
</dbReference>
<dbReference type="GO" id="GO:0000977">
    <property type="term" value="F:RNA polymerase II transcription regulatory region sequence-specific DNA binding"/>
    <property type="evidence" value="ECO:0000318"/>
    <property type="project" value="GO_Central"/>
</dbReference>
<dbReference type="GO" id="GO:1990837">
    <property type="term" value="F:sequence-specific double-stranded DNA binding"/>
    <property type="evidence" value="ECO:0000314"/>
    <property type="project" value="ARUK-UCL"/>
</dbReference>
<dbReference type="GO" id="GO:0030521">
    <property type="term" value="P:androgen receptor signaling pathway"/>
    <property type="evidence" value="ECO:0000270"/>
    <property type="project" value="UniProtKB"/>
</dbReference>
<dbReference type="GO" id="GO:0010628">
    <property type="term" value="P:positive regulation of gene expression"/>
    <property type="evidence" value="ECO:0000315"/>
    <property type="project" value="UniProtKB"/>
</dbReference>
<dbReference type="GO" id="GO:0006355">
    <property type="term" value="P:regulation of DNA-templated transcription"/>
    <property type="evidence" value="ECO:0000303"/>
    <property type="project" value="UniProtKB"/>
</dbReference>
<dbReference type="GO" id="GO:0006357">
    <property type="term" value="P:regulation of transcription by RNA polymerase II"/>
    <property type="evidence" value="ECO:0000318"/>
    <property type="project" value="GO_Central"/>
</dbReference>
<dbReference type="CDD" id="cd00086">
    <property type="entry name" value="homeodomain"/>
    <property type="match status" value="1"/>
</dbReference>
<dbReference type="FunFam" id="1.10.10.60:FF:000485">
    <property type="entry name" value="Rhox homeobox family member 1"/>
    <property type="match status" value="1"/>
</dbReference>
<dbReference type="Gene3D" id="1.10.10.60">
    <property type="entry name" value="Homeodomain-like"/>
    <property type="match status" value="1"/>
</dbReference>
<dbReference type="InterPro" id="IPR001356">
    <property type="entry name" value="HD"/>
</dbReference>
<dbReference type="InterPro" id="IPR017970">
    <property type="entry name" value="Homeobox_CS"/>
</dbReference>
<dbReference type="InterPro" id="IPR009057">
    <property type="entry name" value="Homeodomain-like_sf"/>
</dbReference>
<dbReference type="InterPro" id="IPR000047">
    <property type="entry name" value="HTH_motif"/>
</dbReference>
<dbReference type="InterPro" id="IPR050649">
    <property type="entry name" value="Paired_Homeobox_TFs"/>
</dbReference>
<dbReference type="PANTHER" id="PTHR24329">
    <property type="entry name" value="HOMEOBOX PROTEIN ARISTALESS"/>
    <property type="match status" value="1"/>
</dbReference>
<dbReference type="PANTHER" id="PTHR24329:SF549">
    <property type="entry name" value="RHOX HOMEOBOX FAMILY MEMBER 1"/>
    <property type="match status" value="1"/>
</dbReference>
<dbReference type="Pfam" id="PF00046">
    <property type="entry name" value="Homeodomain"/>
    <property type="match status" value="1"/>
</dbReference>
<dbReference type="PRINTS" id="PR00031">
    <property type="entry name" value="HTHREPRESSR"/>
</dbReference>
<dbReference type="SMART" id="SM00389">
    <property type="entry name" value="HOX"/>
    <property type="match status" value="1"/>
</dbReference>
<dbReference type="SUPFAM" id="SSF46689">
    <property type="entry name" value="Homeodomain-like"/>
    <property type="match status" value="1"/>
</dbReference>
<dbReference type="PROSITE" id="PS00027">
    <property type="entry name" value="HOMEOBOX_1"/>
    <property type="match status" value="1"/>
</dbReference>
<dbReference type="PROSITE" id="PS50071">
    <property type="entry name" value="HOMEOBOX_2"/>
    <property type="match status" value="1"/>
</dbReference>
<accession>Q8NHV9</accession>
<accession>O95030</accession>
<accession>Q3SYE0</accession>
<gene>
    <name evidence="9" type="primary">RHOXF1</name>
    <name type="synonym">OTEX</name>
    <name type="synonym">PEPP1</name>
</gene>
<protein>
    <recommendedName>
        <fullName evidence="8">Rhox homeobox family member 1</fullName>
    </recommendedName>
    <alternativeName>
        <fullName>Ovary-, testis- and epididymis-expressed gene protein</fullName>
    </alternativeName>
    <alternativeName>
        <fullName>Paired-like homeobox protein PEPP-1</fullName>
    </alternativeName>
</protein>
<name>RHXF1_HUMAN</name>
<sequence length="184" mass="20542">MARSLVHDTVFYCLSVYQVKISPTPQLGAASSAEGHVGQGAPGLMGNMNPEGGVNHENGMNRDGGMIPEGGGGNQEPRQQPQPPPEEPAQAAMEGPQPENMQPRTRRTKFTLLQVEELESVFRHTQYPDVPTRRELAENLGVTEDKVRVWFKNKRARCRRHQRELMLANELRADPDDCVYIVVD</sequence>
<keyword id="KW-0238">DNA-binding</keyword>
<keyword id="KW-0371">Homeobox</keyword>
<keyword id="KW-0539">Nucleus</keyword>
<keyword id="KW-1267">Proteomics identification</keyword>
<keyword id="KW-1185">Reference proteome</keyword>
<keyword id="KW-0804">Transcription</keyword>
<keyword id="KW-0805">Transcription regulation</keyword>
<organism>
    <name type="scientific">Homo sapiens</name>
    <name type="common">Human</name>
    <dbReference type="NCBI Taxonomy" id="9606"/>
    <lineage>
        <taxon>Eukaryota</taxon>
        <taxon>Metazoa</taxon>
        <taxon>Chordata</taxon>
        <taxon>Craniata</taxon>
        <taxon>Vertebrata</taxon>
        <taxon>Euteleostomi</taxon>
        <taxon>Mammalia</taxon>
        <taxon>Eutheria</taxon>
        <taxon>Euarchontoglires</taxon>
        <taxon>Primates</taxon>
        <taxon>Haplorrhini</taxon>
        <taxon>Catarrhini</taxon>
        <taxon>Hominidae</taxon>
        <taxon>Homo</taxon>
    </lineage>
</organism>
<feature type="chain" id="PRO_0000049245" description="Rhox homeobox family member 1">
    <location>
        <begin position="1"/>
        <end position="184"/>
    </location>
</feature>
<feature type="DNA-binding region" description="Homeobox" evidence="1">
    <location>
        <begin position="103"/>
        <end position="162"/>
    </location>
</feature>
<feature type="region of interest" description="Disordered" evidence="2">
    <location>
        <begin position="26"/>
        <end position="104"/>
    </location>
</feature>
<feature type="short sequence motif" description="Nuclear localization signal">
    <location>
        <begin position="155"/>
        <end position="164"/>
    </location>
</feature>
<feature type="compositionally biased region" description="Low complexity" evidence="2">
    <location>
        <begin position="88"/>
        <end position="99"/>
    </location>
</feature>
<feature type="sequence variant" id="VAR_089313" description="Found in a man with non-obstructive azoospermia; uncertain significance; dbSNP:rs1246288348." evidence="7">
    <original>A</original>
    <variation>V</variation>
    <location>
        <position position="91"/>
    </location>
</feature>
<feature type="sequence variant" id="VAR_089314" description="Found in a man with non-obstructive azoospermia; uncertain significance." evidence="7">
    <original>V</original>
    <variation>M</variation>
    <location>
        <position position="130"/>
    </location>
</feature>
<feature type="sequence variant" id="VAR_089315" description="Found in a man with severe oligozoospermia; uncertain significance." evidence="7">
    <original>A</original>
    <variation>V</variation>
    <location>
        <position position="156"/>
    </location>
</feature>
<feature type="sequence variant" id="VAR_089316" description="Found in a man with severe oligozoospermia; uncertain significance." evidence="7">
    <location>
        <begin position="160"/>
        <end position="184"/>
    </location>
</feature>
<feature type="sequence variant" id="VAR_049587" description="In dbSNP:rs2301977." evidence="6">
    <original>R</original>
    <variation>H</variation>
    <location>
        <position position="172"/>
    </location>
</feature>
<feature type="sequence variant" id="VAR_077002" description="In dbSNP:rs138060880." evidence="5">
    <original>D</original>
    <variation>H</variation>
    <location>
        <position position="177"/>
    </location>
</feature>
<evidence type="ECO:0000255" key="1">
    <source>
        <dbReference type="PROSITE-ProRule" id="PRU00108"/>
    </source>
</evidence>
<evidence type="ECO:0000256" key="2">
    <source>
        <dbReference type="SAM" id="MobiDB-lite"/>
    </source>
</evidence>
<evidence type="ECO:0000269" key="3">
    <source>
    </source>
</evidence>
<evidence type="ECO:0000269" key="4">
    <source>
    </source>
</evidence>
<evidence type="ECO:0000269" key="5">
    <source>
    </source>
</evidence>
<evidence type="ECO:0000269" key="6">
    <source>
    </source>
</evidence>
<evidence type="ECO:0000269" key="7">
    <source>
    </source>
</evidence>
<evidence type="ECO:0000305" key="8"/>
<evidence type="ECO:0000312" key="9">
    <source>
        <dbReference type="HGNC" id="HGNC:29993"/>
    </source>
</evidence>
<reference key="1">
    <citation type="journal article" date="2002" name="Biochem. J.">
        <title>OTEX, an androgen-regulated human member of the paired-like class of homeobox genes.</title>
        <authorList>
            <person name="Geserick C."/>
            <person name="Weiss B."/>
            <person name="Schleuning W.-D."/>
            <person name="Haendler B."/>
        </authorList>
    </citation>
    <scope>NUCLEOTIDE SEQUENCE [MRNA]</scope>
    <scope>SUBCELLULAR LOCATION</scope>
    <scope>MUTAGENESIS OF THE NUCLEAR LOCALIZATION SIGNAL</scope>
    <source>
        <tissue>Ovary</tissue>
        <tissue>Testis</tissue>
    </source>
</reference>
<reference key="2">
    <citation type="journal article" date="2005" name="Nature">
        <title>The DNA sequence of the human X chromosome.</title>
        <authorList>
            <person name="Ross M.T."/>
            <person name="Grafham D.V."/>
            <person name="Coffey A.J."/>
            <person name="Scherer S."/>
            <person name="McLay K."/>
            <person name="Muzny D."/>
            <person name="Platzer M."/>
            <person name="Howell G.R."/>
            <person name="Burrows C."/>
            <person name="Bird C.P."/>
            <person name="Frankish A."/>
            <person name="Lovell F.L."/>
            <person name="Howe K.L."/>
            <person name="Ashurst J.L."/>
            <person name="Fulton R.S."/>
            <person name="Sudbrak R."/>
            <person name="Wen G."/>
            <person name="Jones M.C."/>
            <person name="Hurles M.E."/>
            <person name="Andrews T.D."/>
            <person name="Scott C.E."/>
            <person name="Searle S."/>
            <person name="Ramser J."/>
            <person name="Whittaker A."/>
            <person name="Deadman R."/>
            <person name="Carter N.P."/>
            <person name="Hunt S.E."/>
            <person name="Chen R."/>
            <person name="Cree A."/>
            <person name="Gunaratne P."/>
            <person name="Havlak P."/>
            <person name="Hodgson A."/>
            <person name="Metzker M.L."/>
            <person name="Richards S."/>
            <person name="Scott G."/>
            <person name="Steffen D."/>
            <person name="Sodergren E."/>
            <person name="Wheeler D.A."/>
            <person name="Worley K.C."/>
            <person name="Ainscough R."/>
            <person name="Ambrose K.D."/>
            <person name="Ansari-Lari M.A."/>
            <person name="Aradhya S."/>
            <person name="Ashwell R.I."/>
            <person name="Babbage A.K."/>
            <person name="Bagguley C.L."/>
            <person name="Ballabio A."/>
            <person name="Banerjee R."/>
            <person name="Barker G.E."/>
            <person name="Barlow K.F."/>
            <person name="Barrett I.P."/>
            <person name="Bates K.N."/>
            <person name="Beare D.M."/>
            <person name="Beasley H."/>
            <person name="Beasley O."/>
            <person name="Beck A."/>
            <person name="Bethel G."/>
            <person name="Blechschmidt K."/>
            <person name="Brady N."/>
            <person name="Bray-Allen S."/>
            <person name="Bridgeman A.M."/>
            <person name="Brown A.J."/>
            <person name="Brown M.J."/>
            <person name="Bonnin D."/>
            <person name="Bruford E.A."/>
            <person name="Buhay C."/>
            <person name="Burch P."/>
            <person name="Burford D."/>
            <person name="Burgess J."/>
            <person name="Burrill W."/>
            <person name="Burton J."/>
            <person name="Bye J.M."/>
            <person name="Carder C."/>
            <person name="Carrel L."/>
            <person name="Chako J."/>
            <person name="Chapman J.C."/>
            <person name="Chavez D."/>
            <person name="Chen E."/>
            <person name="Chen G."/>
            <person name="Chen Y."/>
            <person name="Chen Z."/>
            <person name="Chinault C."/>
            <person name="Ciccodicola A."/>
            <person name="Clark S.Y."/>
            <person name="Clarke G."/>
            <person name="Clee C.M."/>
            <person name="Clegg S."/>
            <person name="Clerc-Blankenburg K."/>
            <person name="Clifford K."/>
            <person name="Cobley V."/>
            <person name="Cole C.G."/>
            <person name="Conquer J.S."/>
            <person name="Corby N."/>
            <person name="Connor R.E."/>
            <person name="David R."/>
            <person name="Davies J."/>
            <person name="Davis C."/>
            <person name="Davis J."/>
            <person name="Delgado O."/>
            <person name="Deshazo D."/>
            <person name="Dhami P."/>
            <person name="Ding Y."/>
            <person name="Dinh H."/>
            <person name="Dodsworth S."/>
            <person name="Draper H."/>
            <person name="Dugan-Rocha S."/>
            <person name="Dunham A."/>
            <person name="Dunn M."/>
            <person name="Durbin K.J."/>
            <person name="Dutta I."/>
            <person name="Eades T."/>
            <person name="Ellwood M."/>
            <person name="Emery-Cohen A."/>
            <person name="Errington H."/>
            <person name="Evans K.L."/>
            <person name="Faulkner L."/>
            <person name="Francis F."/>
            <person name="Frankland J."/>
            <person name="Fraser A.E."/>
            <person name="Galgoczy P."/>
            <person name="Gilbert J."/>
            <person name="Gill R."/>
            <person name="Gloeckner G."/>
            <person name="Gregory S.G."/>
            <person name="Gribble S."/>
            <person name="Griffiths C."/>
            <person name="Grocock R."/>
            <person name="Gu Y."/>
            <person name="Gwilliam R."/>
            <person name="Hamilton C."/>
            <person name="Hart E.A."/>
            <person name="Hawes A."/>
            <person name="Heath P.D."/>
            <person name="Heitmann K."/>
            <person name="Hennig S."/>
            <person name="Hernandez J."/>
            <person name="Hinzmann B."/>
            <person name="Ho S."/>
            <person name="Hoffs M."/>
            <person name="Howden P.J."/>
            <person name="Huckle E.J."/>
            <person name="Hume J."/>
            <person name="Hunt P.J."/>
            <person name="Hunt A.R."/>
            <person name="Isherwood J."/>
            <person name="Jacob L."/>
            <person name="Johnson D."/>
            <person name="Jones S."/>
            <person name="de Jong P.J."/>
            <person name="Joseph S.S."/>
            <person name="Keenan S."/>
            <person name="Kelly S."/>
            <person name="Kershaw J.K."/>
            <person name="Khan Z."/>
            <person name="Kioschis P."/>
            <person name="Klages S."/>
            <person name="Knights A.J."/>
            <person name="Kosiura A."/>
            <person name="Kovar-Smith C."/>
            <person name="Laird G.K."/>
            <person name="Langford C."/>
            <person name="Lawlor S."/>
            <person name="Leversha M."/>
            <person name="Lewis L."/>
            <person name="Liu W."/>
            <person name="Lloyd C."/>
            <person name="Lloyd D.M."/>
            <person name="Loulseged H."/>
            <person name="Loveland J.E."/>
            <person name="Lovell J.D."/>
            <person name="Lozado R."/>
            <person name="Lu J."/>
            <person name="Lyne R."/>
            <person name="Ma J."/>
            <person name="Maheshwari M."/>
            <person name="Matthews L.H."/>
            <person name="McDowall J."/>
            <person name="McLaren S."/>
            <person name="McMurray A."/>
            <person name="Meidl P."/>
            <person name="Meitinger T."/>
            <person name="Milne S."/>
            <person name="Miner G."/>
            <person name="Mistry S.L."/>
            <person name="Morgan M."/>
            <person name="Morris S."/>
            <person name="Mueller I."/>
            <person name="Mullikin J.C."/>
            <person name="Nguyen N."/>
            <person name="Nordsiek G."/>
            <person name="Nyakatura G."/>
            <person name="O'dell C.N."/>
            <person name="Okwuonu G."/>
            <person name="Palmer S."/>
            <person name="Pandian R."/>
            <person name="Parker D."/>
            <person name="Parrish J."/>
            <person name="Pasternak S."/>
            <person name="Patel D."/>
            <person name="Pearce A.V."/>
            <person name="Pearson D.M."/>
            <person name="Pelan S.E."/>
            <person name="Perez L."/>
            <person name="Porter K.M."/>
            <person name="Ramsey Y."/>
            <person name="Reichwald K."/>
            <person name="Rhodes S."/>
            <person name="Ridler K.A."/>
            <person name="Schlessinger D."/>
            <person name="Schueler M.G."/>
            <person name="Sehra H.K."/>
            <person name="Shaw-Smith C."/>
            <person name="Shen H."/>
            <person name="Sheridan E.M."/>
            <person name="Shownkeen R."/>
            <person name="Skuce C.D."/>
            <person name="Smith M.L."/>
            <person name="Sotheran E.C."/>
            <person name="Steingruber H.E."/>
            <person name="Steward C.A."/>
            <person name="Storey R."/>
            <person name="Swann R.M."/>
            <person name="Swarbreck D."/>
            <person name="Tabor P.E."/>
            <person name="Taudien S."/>
            <person name="Taylor T."/>
            <person name="Teague B."/>
            <person name="Thomas K."/>
            <person name="Thorpe A."/>
            <person name="Timms K."/>
            <person name="Tracey A."/>
            <person name="Trevanion S."/>
            <person name="Tromans A.C."/>
            <person name="d'Urso M."/>
            <person name="Verduzco D."/>
            <person name="Villasana D."/>
            <person name="Waldron L."/>
            <person name="Wall M."/>
            <person name="Wang Q."/>
            <person name="Warren J."/>
            <person name="Warry G.L."/>
            <person name="Wei X."/>
            <person name="West A."/>
            <person name="Whitehead S.L."/>
            <person name="Whiteley M.N."/>
            <person name="Wilkinson J.E."/>
            <person name="Willey D.L."/>
            <person name="Williams G."/>
            <person name="Williams L."/>
            <person name="Williamson A."/>
            <person name="Williamson H."/>
            <person name="Wilming L."/>
            <person name="Woodmansey R.L."/>
            <person name="Wray P.W."/>
            <person name="Yen J."/>
            <person name="Zhang J."/>
            <person name="Zhou J."/>
            <person name="Zoghbi H."/>
            <person name="Zorilla S."/>
            <person name="Buck D."/>
            <person name="Reinhardt R."/>
            <person name="Poustka A."/>
            <person name="Rosenthal A."/>
            <person name="Lehrach H."/>
            <person name="Meindl A."/>
            <person name="Minx P.J."/>
            <person name="Hillier L.W."/>
            <person name="Willard H.F."/>
            <person name="Wilson R.K."/>
            <person name="Waterston R.H."/>
            <person name="Rice C.M."/>
            <person name="Vaudin M."/>
            <person name="Coulson A."/>
            <person name="Nelson D.L."/>
            <person name="Weinstock G."/>
            <person name="Sulston J.E."/>
            <person name="Durbin R.M."/>
            <person name="Hubbard T."/>
            <person name="Gibbs R.A."/>
            <person name="Beck S."/>
            <person name="Rogers J."/>
            <person name="Bentley D.R."/>
        </authorList>
    </citation>
    <scope>NUCLEOTIDE SEQUENCE [LARGE SCALE GENOMIC DNA]</scope>
</reference>
<reference key="3">
    <citation type="journal article" date="2004" name="Genome Res.">
        <title>The status, quality, and expansion of the NIH full-length cDNA project: the Mammalian Gene Collection (MGC).</title>
        <authorList>
            <consortium name="The MGC Project Team"/>
        </authorList>
    </citation>
    <scope>NUCLEOTIDE SEQUENCE [LARGE SCALE MRNA]</scope>
</reference>
<reference key="4">
    <citation type="journal article" date="2002" name="Gene">
        <title>Two novel human X-linked homeobox genes, hPEPP1 and hPEPP2, selectively expressed in the testis.</title>
        <authorList>
            <person name="Wayne C.M."/>
            <person name="MacLean J.A. II"/>
            <person name="Cornwall G."/>
            <person name="Wilkinson M.F."/>
        </authorList>
    </citation>
    <scope>TISSUE SPECIFICITY</scope>
</reference>
<reference key="5">
    <citation type="journal article" date="2016" name="Ann. Neurol.">
        <title>ADSSL1 mutation relevant to autosomal recessive adolescent onset distal myopathy.</title>
        <authorList>
            <person name="Park H.J."/>
            <person name="Hong Y.B."/>
            <person name="Choi Y.C."/>
            <person name="Lee J."/>
            <person name="Kim E.J."/>
            <person name="Lee J.S."/>
            <person name="Mo W.M."/>
            <person name="Ki S.M."/>
            <person name="Kim H.I."/>
            <person name="Kim H.J."/>
            <person name="Hyun Y.S."/>
            <person name="Hong H.D."/>
            <person name="Nam K."/>
            <person name="Jung S.C."/>
            <person name="Kim S.B."/>
            <person name="Kim S.H."/>
            <person name="Kim D.H."/>
            <person name="Oh K.W."/>
            <person name="Kim S.H."/>
            <person name="Yoo J.H."/>
            <person name="Lee J.E."/>
            <person name="Chung K.W."/>
            <person name="Choi B.O."/>
        </authorList>
    </citation>
    <scope>VARIANT HIS-177</scope>
</reference>
<reference key="6">
    <citation type="journal article" date="2016" name="Hum. Mol. Genet.">
        <title>The human RHOX gene cluster: target genes and functional analysis of gene variants in infertile men.</title>
        <authorList>
            <person name="Borgmann J."/>
            <person name="Tuettelmann F."/>
            <person name="Dworniczak B."/>
            <person name="Roepke A."/>
            <person name="Song H.W."/>
            <person name="Kliesch S."/>
            <person name="Wilkinson M.F."/>
            <person name="Laurentino S."/>
            <person name="Gromoll J."/>
        </authorList>
    </citation>
    <scope>FUNCTION</scope>
    <scope>TISSUE SPECIFICITY</scope>
    <scope>VARIANT HIS-172</scope>
    <scope>CHARACTERIZATION OF VARIANT HIS-172</scope>
</reference>
<reference key="7">
    <citation type="journal article" date="2024" name="Mol. Hum. Reprod.">
        <title>Deleterious variants in X-linked RHOXF1 cause male infertility with oligo- and azoospermia.</title>
        <authorList>
            <person name="Yi S."/>
            <person name="Wang W."/>
            <person name="Su L."/>
            <person name="Meng L."/>
            <person name="Li Y."/>
            <person name="Tan C."/>
            <person name="Liu Q."/>
            <person name="Zhang H."/>
            <person name="Fan L."/>
            <person name="Lu G."/>
            <person name="Hu L."/>
            <person name="Du J."/>
            <person name="Lin G."/>
            <person name="Tan Y.Q."/>
            <person name="Tu C."/>
            <person name="Zhang Q."/>
        </authorList>
    </citation>
    <scope>VARIANTS VAL-91; MET-130; VAL-156 AND 160-ARG--ASP-184 DEL</scope>
</reference>